<protein>
    <recommendedName>
        <fullName evidence="1">ATP synthase subunit a</fullName>
    </recommendedName>
    <alternativeName>
        <fullName evidence="1">ATP synthase F0 sector subunit a</fullName>
    </alternativeName>
    <alternativeName>
        <fullName evidence="1">F-ATPase subunit 6</fullName>
    </alternativeName>
</protein>
<feature type="chain" id="PRO_1000145295" description="ATP synthase subunit a">
    <location>
        <begin position="1"/>
        <end position="249"/>
    </location>
</feature>
<feature type="transmembrane region" description="Helical" evidence="1">
    <location>
        <begin position="30"/>
        <end position="50"/>
    </location>
</feature>
<feature type="transmembrane region" description="Helical" evidence="1">
    <location>
        <begin position="84"/>
        <end position="104"/>
    </location>
</feature>
<feature type="transmembrane region" description="Helical" evidence="1">
    <location>
        <begin position="114"/>
        <end position="134"/>
    </location>
</feature>
<feature type="transmembrane region" description="Helical" evidence="1">
    <location>
        <begin position="143"/>
        <end position="163"/>
    </location>
</feature>
<feature type="transmembrane region" description="Helical" evidence="1">
    <location>
        <begin position="193"/>
        <end position="213"/>
    </location>
</feature>
<feature type="transmembrane region" description="Helical" evidence="1">
    <location>
        <begin position="220"/>
        <end position="240"/>
    </location>
</feature>
<proteinExistence type="inferred from homology"/>
<evidence type="ECO:0000255" key="1">
    <source>
        <dbReference type="HAMAP-Rule" id="MF_01393"/>
    </source>
</evidence>
<name>ATP6_AFIC5</name>
<keyword id="KW-0066">ATP synthesis</keyword>
<keyword id="KW-0997">Cell inner membrane</keyword>
<keyword id="KW-1003">Cell membrane</keyword>
<keyword id="KW-0138">CF(0)</keyword>
<keyword id="KW-0375">Hydrogen ion transport</keyword>
<keyword id="KW-0406">Ion transport</keyword>
<keyword id="KW-0472">Membrane</keyword>
<keyword id="KW-1185">Reference proteome</keyword>
<keyword id="KW-0812">Transmembrane</keyword>
<keyword id="KW-1133">Transmembrane helix</keyword>
<keyword id="KW-0813">Transport</keyword>
<dbReference type="EMBL" id="CP001196">
    <property type="protein sequence ID" value="ACI91842.1"/>
    <property type="molecule type" value="Genomic_DNA"/>
</dbReference>
<dbReference type="EMBL" id="CP002826">
    <property type="protein sequence ID" value="AEI07926.1"/>
    <property type="molecule type" value="Genomic_DNA"/>
</dbReference>
<dbReference type="RefSeq" id="WP_012561872.1">
    <property type="nucleotide sequence ID" value="NC_015684.1"/>
</dbReference>
<dbReference type="SMR" id="B6JDD0"/>
<dbReference type="STRING" id="504832.OCA5_c32500"/>
<dbReference type="KEGG" id="oca:OCAR_4700"/>
<dbReference type="KEGG" id="ocg:OCA5_c32500"/>
<dbReference type="PATRIC" id="fig|504832.7.peg.3417"/>
<dbReference type="eggNOG" id="COG0356">
    <property type="taxonomic scope" value="Bacteria"/>
</dbReference>
<dbReference type="HOGENOM" id="CLU_041018_0_2_5"/>
<dbReference type="OrthoDB" id="9809130at2"/>
<dbReference type="Proteomes" id="UP000007730">
    <property type="component" value="Chromosome"/>
</dbReference>
<dbReference type="GO" id="GO:0005886">
    <property type="term" value="C:plasma membrane"/>
    <property type="evidence" value="ECO:0007669"/>
    <property type="project" value="UniProtKB-SubCell"/>
</dbReference>
<dbReference type="GO" id="GO:0045259">
    <property type="term" value="C:proton-transporting ATP synthase complex"/>
    <property type="evidence" value="ECO:0007669"/>
    <property type="project" value="UniProtKB-KW"/>
</dbReference>
<dbReference type="GO" id="GO:0046933">
    <property type="term" value="F:proton-transporting ATP synthase activity, rotational mechanism"/>
    <property type="evidence" value="ECO:0007669"/>
    <property type="project" value="UniProtKB-UniRule"/>
</dbReference>
<dbReference type="CDD" id="cd00310">
    <property type="entry name" value="ATP-synt_Fo_a_6"/>
    <property type="match status" value="1"/>
</dbReference>
<dbReference type="FunFam" id="1.20.120.220:FF:000003">
    <property type="entry name" value="ATP synthase subunit a"/>
    <property type="match status" value="1"/>
</dbReference>
<dbReference type="Gene3D" id="1.20.120.220">
    <property type="entry name" value="ATP synthase, F0 complex, subunit A"/>
    <property type="match status" value="1"/>
</dbReference>
<dbReference type="HAMAP" id="MF_01393">
    <property type="entry name" value="ATP_synth_a_bact"/>
    <property type="match status" value="1"/>
</dbReference>
<dbReference type="InterPro" id="IPR000568">
    <property type="entry name" value="ATP_synth_F0_asu"/>
</dbReference>
<dbReference type="InterPro" id="IPR023011">
    <property type="entry name" value="ATP_synth_F0_asu_AS"/>
</dbReference>
<dbReference type="InterPro" id="IPR045083">
    <property type="entry name" value="ATP_synth_F0_asu_bact/mt"/>
</dbReference>
<dbReference type="InterPro" id="IPR035908">
    <property type="entry name" value="F0_ATP_A_sf"/>
</dbReference>
<dbReference type="NCBIfam" id="TIGR01131">
    <property type="entry name" value="ATP_synt_6_or_A"/>
    <property type="match status" value="1"/>
</dbReference>
<dbReference type="NCBIfam" id="NF004482">
    <property type="entry name" value="PRK05815.2-4"/>
    <property type="match status" value="1"/>
</dbReference>
<dbReference type="PANTHER" id="PTHR11410">
    <property type="entry name" value="ATP SYNTHASE SUBUNIT A"/>
    <property type="match status" value="1"/>
</dbReference>
<dbReference type="PANTHER" id="PTHR11410:SF0">
    <property type="entry name" value="ATP SYNTHASE SUBUNIT A"/>
    <property type="match status" value="1"/>
</dbReference>
<dbReference type="Pfam" id="PF00119">
    <property type="entry name" value="ATP-synt_A"/>
    <property type="match status" value="1"/>
</dbReference>
<dbReference type="PRINTS" id="PR00123">
    <property type="entry name" value="ATPASEA"/>
</dbReference>
<dbReference type="SUPFAM" id="SSF81336">
    <property type="entry name" value="F1F0 ATP synthase subunit A"/>
    <property type="match status" value="1"/>
</dbReference>
<dbReference type="PROSITE" id="PS00449">
    <property type="entry name" value="ATPASE_A"/>
    <property type="match status" value="1"/>
</dbReference>
<organism>
    <name type="scientific">Afipia carboxidovorans (strain ATCC 49405 / DSM 1227 / KCTC 32145 / OM5)</name>
    <name type="common">Oligotropha carboxidovorans</name>
    <dbReference type="NCBI Taxonomy" id="504832"/>
    <lineage>
        <taxon>Bacteria</taxon>
        <taxon>Pseudomonadati</taxon>
        <taxon>Pseudomonadota</taxon>
        <taxon>Alphaproteobacteria</taxon>
        <taxon>Hyphomicrobiales</taxon>
        <taxon>Nitrobacteraceae</taxon>
        <taxon>Afipia</taxon>
    </lineage>
</organism>
<reference key="1">
    <citation type="journal article" date="2008" name="J. Bacteriol.">
        <title>Genome sequence of the chemolithoautotrophic bacterium Oligotropha carboxidovorans OM5T.</title>
        <authorList>
            <person name="Paul D."/>
            <person name="Bridges S."/>
            <person name="Burgess S.C."/>
            <person name="Dandass Y."/>
            <person name="Lawrence M.L."/>
        </authorList>
    </citation>
    <scope>NUCLEOTIDE SEQUENCE [LARGE SCALE GENOMIC DNA]</scope>
    <source>
        <strain>ATCC 49405 / DSM 1227 / KCTC 32145 / OM5</strain>
    </source>
</reference>
<reference key="2">
    <citation type="journal article" date="2011" name="J. Bacteriol.">
        <title>Complete genome sequences of the chemolithoautotrophic Oligotropha carboxidovorans strains OM4 and OM5.</title>
        <authorList>
            <person name="Volland S."/>
            <person name="Rachinger M."/>
            <person name="Strittmatter A."/>
            <person name="Daniel R."/>
            <person name="Gottschalk G."/>
            <person name="Meyer O."/>
        </authorList>
    </citation>
    <scope>NUCLEOTIDE SEQUENCE [LARGE SCALE GENOMIC DNA]</scope>
    <source>
        <strain>ATCC 49405 / DSM 1227 / KCTC 32145 / OM5</strain>
    </source>
</reference>
<sequence length="249" mass="26977">MADPVEQFEIHKIFSLGHIGGQEIAFTNSSLYMLLAVGAVALLMLGGSAGRRLVPTRFQSMAELSYEFVVNMVRESLGEEGMKFFPLVFSIFMFVLMANLIGVIPYTFSVTSHLIVTVALALIVFLTVLLYGLYKNGLKFFRVFVPSGVPIYILPLIAMIEVISFLSRPVSHSVRLFANMLAGHITLKVFASFVTSLGALGVAGIAGAALPLAMTTAISILEVLVALLQAYVFAILTCIYLNDALHPGH</sequence>
<comment type="function">
    <text evidence="1">Key component of the proton channel; it plays a direct role in the translocation of protons across the membrane.</text>
</comment>
<comment type="subunit">
    <text evidence="1">F-type ATPases have 2 components, CF(1) - the catalytic core - and CF(0) - the membrane proton channel. CF(1) has five subunits: alpha(3), beta(3), gamma(1), delta(1), epsilon(1). CF(0) has three main subunits: a(1), b(2) and c(9-12). The alpha and beta chains form an alternating ring which encloses part of the gamma chain. CF(1) is attached to CF(0) by a central stalk formed by the gamma and epsilon chains, while a peripheral stalk is formed by the delta and b chains.</text>
</comment>
<comment type="subcellular location">
    <subcellularLocation>
        <location evidence="1">Cell inner membrane</location>
        <topology evidence="1">Multi-pass membrane protein</topology>
    </subcellularLocation>
</comment>
<comment type="similarity">
    <text evidence="1">Belongs to the ATPase A chain family.</text>
</comment>
<gene>
    <name evidence="1" type="primary">atpB</name>
    <name type="ordered locus">OCAR_4700</name>
    <name type="ordered locus">OCA5_c32500</name>
</gene>
<accession>B6JDD0</accession>
<accession>F8BSJ8</accession>